<keyword id="KW-0963">Cytoplasm</keyword>
<keyword id="KW-0342">GTP-binding</keyword>
<keyword id="KW-0436">Ligase</keyword>
<keyword id="KW-0547">Nucleotide-binding</keyword>
<keyword id="KW-1185">Reference proteome</keyword>
<keyword id="KW-0694">RNA-binding</keyword>
<evidence type="ECO:0000255" key="1">
    <source>
        <dbReference type="HAMAP-Rule" id="MF_00200"/>
    </source>
</evidence>
<evidence type="ECO:0000269" key="2">
    <source>
    </source>
</evidence>
<evidence type="ECO:0000303" key="3">
    <source>
    </source>
</evidence>
<evidence type="ECO:0000305" key="4"/>
<evidence type="ECO:0000305" key="5">
    <source>
    </source>
</evidence>
<accession>Q8U0N7</accession>
<reference key="1">
    <citation type="journal article" date="1999" name="Genetics">
        <title>Divergence of the hyperthermophilic archaea Pyrococcus furiosus and P. horikoshii inferred from complete genomic sequences.</title>
        <authorList>
            <person name="Maeder D.L."/>
            <person name="Weiss R.B."/>
            <person name="Dunn D.M."/>
            <person name="Cherry J.L."/>
            <person name="Gonzalez J.M."/>
            <person name="DiRuggiero J."/>
            <person name="Robb F.T."/>
        </authorList>
    </citation>
    <scope>NUCLEOTIDE SEQUENCE [LARGE SCALE GENOMIC DNA]</scope>
    <source>
        <strain>ATCC 43587 / DSM 3638 / JCM 8422 / Vc1</strain>
    </source>
</reference>
<reference key="2">
    <citation type="journal article" date="2011" name="Genes Cells">
        <title>GTP-dependent RNA 3'-terminal phosphate cyclase from the hyperthermophilic archaeon Pyrococcus furiosus.</title>
        <authorList>
            <person name="Sato A."/>
            <person name="Soga T."/>
            <person name="Igarashi K."/>
            <person name="Takesue K."/>
            <person name="Tomita M."/>
            <person name="Kanai A."/>
        </authorList>
    </citation>
    <scope>FUNCTION</scope>
    <scope>CATALYTIC ACTIVITY</scope>
    <scope>RNA-BINDING</scope>
    <scope>ACTIVITY REGULATION</scope>
    <scope>BIOPHYSICOCHEMICAL PROPERTIES</scope>
    <source>
        <strain>ATCC 43587 / DSM 3638 / JCM 8422 / Vc1</strain>
    </source>
</reference>
<organism>
    <name type="scientific">Pyrococcus furiosus (strain ATCC 43587 / DSM 3638 / JCM 8422 / Vc1)</name>
    <dbReference type="NCBI Taxonomy" id="186497"/>
    <lineage>
        <taxon>Archaea</taxon>
        <taxon>Methanobacteriati</taxon>
        <taxon>Methanobacteriota</taxon>
        <taxon>Thermococci</taxon>
        <taxon>Thermococcales</taxon>
        <taxon>Thermococcaceae</taxon>
        <taxon>Pyrococcus</taxon>
    </lineage>
</organism>
<dbReference type="EC" id="6.5.1.5" evidence="2"/>
<dbReference type="EMBL" id="AE009950">
    <property type="protein sequence ID" value="AAL81673.1"/>
    <property type="molecule type" value="Genomic_DNA"/>
</dbReference>
<dbReference type="RefSeq" id="WP_011012696.1">
    <property type="nucleotide sequence ID" value="NZ_CP023154.1"/>
</dbReference>
<dbReference type="SMR" id="Q8U0N7"/>
<dbReference type="STRING" id="186497.PF1549"/>
<dbReference type="PaxDb" id="186497-PF1549"/>
<dbReference type="GeneID" id="41713370"/>
<dbReference type="KEGG" id="pfu:PF1549"/>
<dbReference type="PATRIC" id="fig|186497.12.peg.1615"/>
<dbReference type="eggNOG" id="arCOG04125">
    <property type="taxonomic scope" value="Archaea"/>
</dbReference>
<dbReference type="HOGENOM" id="CLU_027882_0_0_2"/>
<dbReference type="OrthoDB" id="7994at2157"/>
<dbReference type="PhylomeDB" id="Q8U0N7"/>
<dbReference type="BRENDA" id="6.5.1.5">
    <property type="organism ID" value="5243"/>
</dbReference>
<dbReference type="Proteomes" id="UP000001013">
    <property type="component" value="Chromosome"/>
</dbReference>
<dbReference type="GO" id="GO:0005737">
    <property type="term" value="C:cytoplasm"/>
    <property type="evidence" value="ECO:0007669"/>
    <property type="project" value="UniProtKB-SubCell"/>
</dbReference>
<dbReference type="GO" id="GO:0005525">
    <property type="term" value="F:GTP binding"/>
    <property type="evidence" value="ECO:0007669"/>
    <property type="project" value="UniProtKB-KW"/>
</dbReference>
<dbReference type="GO" id="GO:0003723">
    <property type="term" value="F:RNA binding"/>
    <property type="evidence" value="ECO:0007669"/>
    <property type="project" value="UniProtKB-KW"/>
</dbReference>
<dbReference type="GO" id="GO:0003963">
    <property type="term" value="F:RNA-3'-phosphate cyclase activity"/>
    <property type="evidence" value="ECO:0007669"/>
    <property type="project" value="UniProtKB-UniRule"/>
</dbReference>
<dbReference type="GO" id="GO:0006396">
    <property type="term" value="P:RNA processing"/>
    <property type="evidence" value="ECO:0007669"/>
    <property type="project" value="InterPro"/>
</dbReference>
<dbReference type="CDD" id="cd00874">
    <property type="entry name" value="RNA_Cyclase_Class_II"/>
    <property type="match status" value="1"/>
</dbReference>
<dbReference type="FunFam" id="3.30.360.20:FF:000002">
    <property type="entry name" value="RNA terminal phosphate cyclase-like 1"/>
    <property type="match status" value="1"/>
</dbReference>
<dbReference type="Gene3D" id="3.65.10.20">
    <property type="entry name" value="RNA 3'-terminal phosphate cyclase domain"/>
    <property type="match status" value="1"/>
</dbReference>
<dbReference type="Gene3D" id="3.30.360.20">
    <property type="entry name" value="RNA 3'-terminal phosphate cyclase, insert domain"/>
    <property type="match status" value="1"/>
</dbReference>
<dbReference type="HAMAP" id="MF_00200">
    <property type="entry name" value="RTC"/>
    <property type="match status" value="1"/>
</dbReference>
<dbReference type="InterPro" id="IPR013791">
    <property type="entry name" value="RNA3'-term_phos_cycl_insert"/>
</dbReference>
<dbReference type="InterPro" id="IPR023797">
    <property type="entry name" value="RNA3'_phos_cyclase_dom"/>
</dbReference>
<dbReference type="InterPro" id="IPR037136">
    <property type="entry name" value="RNA3'_phos_cyclase_dom_sf"/>
</dbReference>
<dbReference type="InterPro" id="IPR000228">
    <property type="entry name" value="RNA3'_term_phos_cyc"/>
</dbReference>
<dbReference type="InterPro" id="IPR017770">
    <property type="entry name" value="RNA3'_term_phos_cyc_type_1"/>
</dbReference>
<dbReference type="InterPro" id="IPR020719">
    <property type="entry name" value="RNA3'_term_phos_cycl-like_CS"/>
</dbReference>
<dbReference type="InterPro" id="IPR013792">
    <property type="entry name" value="RNA3'P_cycl/enolpyr_Trfase_a/b"/>
</dbReference>
<dbReference type="InterPro" id="IPR036553">
    <property type="entry name" value="RPTC_insert"/>
</dbReference>
<dbReference type="NCBIfam" id="TIGR03399">
    <property type="entry name" value="RNA_3prim_cycl"/>
    <property type="match status" value="1"/>
</dbReference>
<dbReference type="PANTHER" id="PTHR11096">
    <property type="entry name" value="RNA 3' TERMINAL PHOSPHATE CYCLASE"/>
    <property type="match status" value="1"/>
</dbReference>
<dbReference type="PANTHER" id="PTHR11096:SF0">
    <property type="entry name" value="RNA 3'-TERMINAL PHOSPHATE CYCLASE"/>
    <property type="match status" value="1"/>
</dbReference>
<dbReference type="Pfam" id="PF01137">
    <property type="entry name" value="RTC"/>
    <property type="match status" value="1"/>
</dbReference>
<dbReference type="Pfam" id="PF05189">
    <property type="entry name" value="RTC_insert"/>
    <property type="match status" value="1"/>
</dbReference>
<dbReference type="PIRSF" id="PIRSF005378">
    <property type="entry name" value="RNA3'_term_phos_cycl_euk"/>
    <property type="match status" value="1"/>
</dbReference>
<dbReference type="SUPFAM" id="SSF55205">
    <property type="entry name" value="EPT/RTPC-like"/>
    <property type="match status" value="1"/>
</dbReference>
<dbReference type="SUPFAM" id="SSF52913">
    <property type="entry name" value="RNA 3'-terminal phosphate cyclase, RPTC, insert domain"/>
    <property type="match status" value="1"/>
</dbReference>
<dbReference type="PROSITE" id="PS01287">
    <property type="entry name" value="RTC"/>
    <property type="match status" value="1"/>
</dbReference>
<feature type="chain" id="PRO_0000156432" description="RNA 3'-terminal phosphate cyclase">
    <location>
        <begin position="1"/>
        <end position="342"/>
    </location>
</feature>
<proteinExistence type="evidence at protein level"/>
<name>RTCA_PYRFU</name>
<protein>
    <recommendedName>
        <fullName evidence="1">RNA 3'-terminal phosphate cyclase</fullName>
        <shortName evidence="1">RNA cyclase</shortName>
        <shortName evidence="1">RNA-3'-phosphate cyclase</shortName>
        <ecNumber evidence="2">6.5.1.5</ecNumber>
    </recommendedName>
    <alternativeName>
        <fullName evidence="4">GTP-dependent RNA 3'-terminal-phosphate cyclase</fullName>
    </alternativeName>
</protein>
<gene>
    <name evidence="3" type="primary">rtc</name>
    <name evidence="1" type="synonym">rtcA</name>
    <name type="ordered locus">PF1549</name>
</gene>
<sequence>MIIIDGSYGEGGGQILRTSIALSAITGEPVKIINIRANRPNPGLRPQHLNAILALKKLANAKVEGAEVGSREVTFIPGELKGGEIRVDIGTAGSITLVLQALLPAMVFAKDTVEFKITGGTDVSWSPPVDYLINVTMFALRKIGIEGEIKLLRRGHYPKGGGIVAGYVKPWIERKELIAEEFENIYKVSGISHATNLPAHVAERQAKAAMEELKVLGVPIEIKKEVSHSLGPGSGIVVWAETECLRLGGDALGKKGKPAEEVGREAAQELLSQVKTKACVDKFLGDQIIPFLAISGGKIKVAEITKHLITNVWVVEQFFGKVFEVKGGVGEKGEVRVVRKAW</sequence>
<comment type="function">
    <text evidence="2">Catalyzes the GTP-dependent conversion of 3'-phosphate to a 2',3'-cyclic phosphodiester at the end of RNA. The biological role of this enzyme is unknown but it is likely to function in some aspects of cellular RNA processing.</text>
</comment>
<comment type="catalytic activity">
    <reaction evidence="2">
        <text>a 3'-end 3'-phospho-ribonucleotide-RNA + GTP = a 3'-end 2',3'-cyclophospho-ribonucleotide-RNA + GMP + diphosphate</text>
        <dbReference type="Rhea" id="RHEA:13969"/>
        <dbReference type="Rhea" id="RHEA-COMP:10463"/>
        <dbReference type="Rhea" id="RHEA-COMP:10464"/>
        <dbReference type="ChEBI" id="CHEBI:33019"/>
        <dbReference type="ChEBI" id="CHEBI:37565"/>
        <dbReference type="ChEBI" id="CHEBI:58115"/>
        <dbReference type="ChEBI" id="CHEBI:83062"/>
        <dbReference type="ChEBI" id="CHEBI:83064"/>
        <dbReference type="EC" id="6.5.1.5"/>
    </reaction>
</comment>
<comment type="activity regulation">
    <text evidence="2">Inhibited by GMP.</text>
</comment>
<comment type="biophysicochemical properties">
    <temperatureDependence>
        <text evidence="2">Optimum temperature is 95 degrees Celsius.</text>
    </temperatureDependence>
</comment>
<comment type="subcellular location">
    <subcellularLocation>
        <location evidence="1">Cytoplasm</location>
    </subcellularLocation>
</comment>
<comment type="miscellaneous">
    <text evidence="5">Generally, RNA 3'-terminal phosphate cyclases are ATP dependent, but P.furiosus enzyme preferentially uses GTP rather than ATP.</text>
</comment>
<comment type="similarity">
    <text evidence="1">Belongs to the RNA 3'-terminal cyclase family. Type 1 subfamily.</text>
</comment>